<sequence length="333" mass="35596">MIETPYLLFLGDAPDMLAAKVAIGIRDWRPDHAVGQISLPGCGANLGLTEMTLEEAKAAGAKTLVIGVANRGGKISQEWKKVLVQALEEGFDLASGLHNLLRDEPDLAAVAEATGRTLHDVRVPSVQYPIADGVKRRGKRCLAVGTDCSVGKMYTALAMDAEMQARGIKSTFRATGQTGILITGDGVPLDAVIADFMAGSIEYLTPDNDDDHWDLIEGQGSLFHVSYSGVTMALVHGGQPDALILCHEPTRTHMRGLPDYDVPSLEELRDVALPLAQRANKDCKIVGISVNTQHLGEEEAVAYLKEVEGRMGLPAVDPYRHGAGRLVDALAAV</sequence>
<accession>A0A2T1AE85</accession>
<comment type="function">
    <text evidence="1 4">N-acetyltransferase involved in a deamination-independent D-glutamate degradation pathway, named the DgcN-DgcA pathway (Probable). Catalyzes the transfer of the acetyl moiety from acetyl-CoA to D-glutamate to generate N-acetyl-D-glutamate (PubMed:36690779).</text>
</comment>
<comment type="catalytic activity">
    <reaction evidence="1">
        <text>D-glutamate + acetyl-CoA = N-acetyl-D-glutamate + CoA + H(+)</text>
        <dbReference type="Rhea" id="RHEA:76495"/>
        <dbReference type="ChEBI" id="CHEBI:15378"/>
        <dbReference type="ChEBI" id="CHEBI:29986"/>
        <dbReference type="ChEBI" id="CHEBI:57287"/>
        <dbReference type="ChEBI" id="CHEBI:57288"/>
        <dbReference type="ChEBI" id="CHEBI:195260"/>
        <dbReference type="EC" id="2.3.1.312"/>
    </reaction>
    <physiologicalReaction direction="left-to-right" evidence="4">
        <dbReference type="Rhea" id="RHEA:76496"/>
    </physiologicalReaction>
</comment>
<comment type="pathway">
    <text evidence="4">Amino-acid degradation.</text>
</comment>
<comment type="similarity">
    <text evidence="3">Belongs to the N-acetyltransferase DgcN family.</text>
</comment>
<proteinExistence type="evidence at protein level"/>
<gene>
    <name evidence="2" type="primary">dgcN</name>
    <name evidence="5" type="ORF">CLV89_10851</name>
</gene>
<reference evidence="5" key="1">
    <citation type="submission" date="2018-03" db="EMBL/GenBank/DDBJ databases">
        <title>Genomic Encyclopedia of Archaeal and Bacterial Type Strains, Phase II (KMG-II): from individual species to whole genera.</title>
        <authorList>
            <person name="Goeker M."/>
        </authorList>
    </citation>
    <scope>NUCLEOTIDE SEQUENCE [LARGE SCALE GENOMIC DNA]</scope>
    <source>
        <strain>DSM 25328 / CCUG 55858 / LMG 24367 / R-28751</strain>
    </source>
</reference>
<reference evidence="6" key="2">
    <citation type="journal article" date="2023" name="ISME J.">
        <title>Novel D-glutamate catabolic pathway in marine Proteobacteria and halophilic archaea.</title>
        <authorList>
            <person name="Yu Y."/>
            <person name="Wang P."/>
            <person name="Cao H.Y."/>
            <person name="Teng Z.J."/>
            <person name="Zhu Y."/>
            <person name="Wang M."/>
            <person name="McMinn A."/>
            <person name="Chen Y."/>
            <person name="Xiang H."/>
            <person name="Zhang Y.Z."/>
            <person name="Chen X.L."/>
            <person name="Zhang Y.Q."/>
        </authorList>
    </citation>
    <scope>X-RAY CRYSTALLOGRAPHY (2.20 ANGSTROMS)</scope>
    <scope>FUNCTION</scope>
    <scope>CATALYTIC ACTIVITY</scope>
    <scope>MUTAGENESIS OF HIS-119; ARG-122; SER-125; GLN-177; ASP-185 AND ASP-190</scope>
    <source>
        <strain>DSM 25328 / CCUG 55858 / LMG 24367 / R-28751</strain>
    </source>
</reference>
<name>DGCN_TRISK</name>
<evidence type="ECO:0000269" key="1">
    <source>
    </source>
</evidence>
<evidence type="ECO:0000303" key="2">
    <source>
    </source>
</evidence>
<evidence type="ECO:0000305" key="3"/>
<evidence type="ECO:0000305" key="4">
    <source>
    </source>
</evidence>
<evidence type="ECO:0000312" key="5">
    <source>
        <dbReference type="EMBL" id="PRZ46905.1"/>
    </source>
</evidence>
<evidence type="ECO:0007744" key="6">
    <source>
        <dbReference type="PDB" id="7XRJ"/>
    </source>
</evidence>
<organism>
    <name type="scientific">Tritonibacter scottomollicae</name>
    <name type="common">Epibacterium scottomollicae</name>
    <dbReference type="NCBI Taxonomy" id="483013"/>
    <lineage>
        <taxon>Bacteria</taxon>
        <taxon>Pseudomonadati</taxon>
        <taxon>Pseudomonadota</taxon>
        <taxon>Alphaproteobacteria</taxon>
        <taxon>Rhodobacterales</taxon>
        <taxon>Paracoccaceae</taxon>
        <taxon>Tritonibacter</taxon>
    </lineage>
</organism>
<keyword id="KW-0002">3D-structure</keyword>
<keyword id="KW-0808">Transferase</keyword>
<feature type="chain" id="PRO_0000462125" description="D-glutamate N-acetyltransferase">
    <location>
        <begin position="1"/>
        <end position="333"/>
    </location>
</feature>
<feature type="mutagenesis site" description="Small decrease in activity." evidence="1">
    <original>H</original>
    <variation>A</variation>
    <location>
        <position position="119"/>
    </location>
</feature>
<feature type="mutagenesis site" description="Small decrease in activity." evidence="1">
    <original>R</original>
    <variation>A</variation>
    <location>
        <position position="122"/>
    </location>
</feature>
<feature type="mutagenesis site" description="Loss of activity." evidence="1">
    <original>S</original>
    <variation>A</variation>
    <location>
        <position position="125"/>
    </location>
</feature>
<feature type="mutagenesis site" description="Loss of activity." evidence="1">
    <original>Q</original>
    <variation>A</variation>
    <location>
        <position position="177"/>
    </location>
</feature>
<feature type="mutagenesis site" description="Small decrease in activity." evidence="1">
    <original>D</original>
    <variation>A</variation>
    <location>
        <position position="185"/>
    </location>
</feature>
<feature type="mutagenesis site" description="Small decrease in activity." evidence="1">
    <original>D</original>
    <variation>A</variation>
    <location>
        <position position="190"/>
    </location>
</feature>
<protein>
    <recommendedName>
        <fullName evidence="3">D-glutamate N-acetyltransferase</fullName>
        <ecNumber evidence="1">2.3.1.312</ecNumber>
    </recommendedName>
</protein>
<dbReference type="EC" id="2.3.1.312" evidence="1"/>
<dbReference type="EMBL" id="PVUF01000008">
    <property type="protein sequence ID" value="PRZ46905.1"/>
    <property type="molecule type" value="Genomic_DNA"/>
</dbReference>
<dbReference type="RefSeq" id="WP_106164169.1">
    <property type="nucleotide sequence ID" value="NZ_PVUF01000008.1"/>
</dbReference>
<dbReference type="PDB" id="7XRJ">
    <property type="method" value="X-ray"/>
    <property type="resolution" value="2.20 A"/>
    <property type="chains" value="A=1-333"/>
</dbReference>
<dbReference type="PDBsum" id="7XRJ"/>
<dbReference type="SMR" id="A0A2T1AE85"/>
<dbReference type="OrthoDB" id="9778498at2"/>
<dbReference type="Proteomes" id="UP000237718">
    <property type="component" value="Unassembled WGS sequence"/>
</dbReference>
<dbReference type="Gene3D" id="3.40.50.720">
    <property type="entry name" value="NAD(P)-binding Rossmann-like Domain"/>
    <property type="match status" value="1"/>
</dbReference>
<dbReference type="Gene3D" id="3.40.50.300">
    <property type="entry name" value="P-loop containing nucleotide triphosphate hydrolases"/>
    <property type="match status" value="1"/>
</dbReference>
<dbReference type="InterPro" id="IPR011669">
    <property type="entry name" value="DgcN-like"/>
</dbReference>
<dbReference type="InterPro" id="IPR035086">
    <property type="entry name" value="DgcN-like_C"/>
</dbReference>
<dbReference type="InterPro" id="IPR035402">
    <property type="entry name" value="DgcN-like_N"/>
</dbReference>
<dbReference type="InterPro" id="IPR027417">
    <property type="entry name" value="P-loop_NTPase"/>
</dbReference>
<dbReference type="NCBIfam" id="NF041892">
    <property type="entry name" value="DgcN"/>
    <property type="match status" value="1"/>
</dbReference>
<dbReference type="PANTHER" id="PTHR40690:SF1">
    <property type="entry name" value="DUF1611 DOMAIN-CONTAINING PROTEIN"/>
    <property type="match status" value="1"/>
</dbReference>
<dbReference type="PANTHER" id="PTHR40690">
    <property type="entry name" value="GLL3100 PROTEIN"/>
    <property type="match status" value="1"/>
</dbReference>
<dbReference type="Pfam" id="PF07755">
    <property type="entry name" value="DUF1611"/>
    <property type="match status" value="1"/>
</dbReference>
<dbReference type="Pfam" id="PF17396">
    <property type="entry name" value="DUF1611_N"/>
    <property type="match status" value="1"/>
</dbReference>
<dbReference type="PIRSF" id="PIRSF026760">
    <property type="entry name" value="UCP026760"/>
    <property type="match status" value="1"/>
</dbReference>
<dbReference type="SUPFAM" id="SSF52540">
    <property type="entry name" value="P-loop containing nucleoside triphosphate hydrolases"/>
    <property type="match status" value="1"/>
</dbReference>